<proteinExistence type="inferred from homology"/>
<comment type="similarity">
    <text evidence="1">Belongs to the 2H phosphoesterase superfamily. YjcG family.</text>
</comment>
<keyword id="KW-0378">Hydrolase</keyword>
<organism>
    <name type="scientific">Bacillus cereus (strain ATCC 10987 / NRS 248)</name>
    <dbReference type="NCBI Taxonomy" id="222523"/>
    <lineage>
        <taxon>Bacteria</taxon>
        <taxon>Bacillati</taxon>
        <taxon>Bacillota</taxon>
        <taxon>Bacilli</taxon>
        <taxon>Bacillales</taxon>
        <taxon>Bacillaceae</taxon>
        <taxon>Bacillus</taxon>
        <taxon>Bacillus cereus group</taxon>
    </lineage>
</organism>
<dbReference type="EC" id="3.1.-.-" evidence="1"/>
<dbReference type="EMBL" id="AE017194">
    <property type="protein sequence ID" value="AAS40277.1"/>
    <property type="molecule type" value="Genomic_DNA"/>
</dbReference>
<dbReference type="SMR" id="Q73BS0"/>
<dbReference type="KEGG" id="bca:BCE_1348"/>
<dbReference type="HOGENOM" id="CLU_132020_0_0_9"/>
<dbReference type="Proteomes" id="UP000002527">
    <property type="component" value="Chromosome"/>
</dbReference>
<dbReference type="GO" id="GO:0016788">
    <property type="term" value="F:hydrolase activity, acting on ester bonds"/>
    <property type="evidence" value="ECO:0007669"/>
    <property type="project" value="UniProtKB-UniRule"/>
</dbReference>
<dbReference type="Gene3D" id="3.90.1140.10">
    <property type="entry name" value="Cyclic phosphodiesterase"/>
    <property type="match status" value="1"/>
</dbReference>
<dbReference type="HAMAP" id="MF_01444">
    <property type="entry name" value="2H_phosphoesterase_YjcG"/>
    <property type="match status" value="1"/>
</dbReference>
<dbReference type="InterPro" id="IPR050580">
    <property type="entry name" value="2H_phosphoesterase_YjcG-like"/>
</dbReference>
<dbReference type="InterPro" id="IPR009097">
    <property type="entry name" value="Cyclic_Pdiesterase"/>
</dbReference>
<dbReference type="InterPro" id="IPR022932">
    <property type="entry name" value="YjcG"/>
</dbReference>
<dbReference type="NCBIfam" id="NF010223">
    <property type="entry name" value="PRK13679.1"/>
    <property type="match status" value="1"/>
</dbReference>
<dbReference type="PANTHER" id="PTHR40037:SF1">
    <property type="entry name" value="PHOSPHOESTERASE SAOUHSC_00951-RELATED"/>
    <property type="match status" value="1"/>
</dbReference>
<dbReference type="PANTHER" id="PTHR40037">
    <property type="entry name" value="PHOSPHOESTERASE YJCG-RELATED"/>
    <property type="match status" value="1"/>
</dbReference>
<dbReference type="Pfam" id="PF13563">
    <property type="entry name" value="2_5_RNA_ligase2"/>
    <property type="match status" value="1"/>
</dbReference>
<dbReference type="SUPFAM" id="SSF55144">
    <property type="entry name" value="LigT-like"/>
    <property type="match status" value="1"/>
</dbReference>
<accession>Q73BS0</accession>
<feature type="chain" id="PRO_0000299325" description="Putative phosphoesterase BCE_1348">
    <location>
        <begin position="1"/>
        <end position="172"/>
    </location>
</feature>
<feature type="short sequence motif" description="HXTX 1" evidence="1">
    <location>
        <begin position="34"/>
        <end position="37"/>
    </location>
</feature>
<feature type="short sequence motif" description="HXTX 2" evidence="1">
    <location>
        <begin position="115"/>
        <end position="118"/>
    </location>
</feature>
<feature type="active site" description="Proton donor" evidence="1">
    <location>
        <position position="34"/>
    </location>
</feature>
<feature type="active site" description="Proton acceptor" evidence="1">
    <location>
        <position position="115"/>
    </location>
</feature>
<name>Y1348_BACC1</name>
<evidence type="ECO:0000255" key="1">
    <source>
        <dbReference type="HAMAP-Rule" id="MF_01444"/>
    </source>
</evidence>
<reference key="1">
    <citation type="journal article" date="2004" name="Nucleic Acids Res.">
        <title>The genome sequence of Bacillus cereus ATCC 10987 reveals metabolic adaptations and a large plasmid related to Bacillus anthracis pXO1.</title>
        <authorList>
            <person name="Rasko D.A."/>
            <person name="Ravel J."/>
            <person name="Oekstad O.A."/>
            <person name="Helgason E."/>
            <person name="Cer R.Z."/>
            <person name="Jiang L."/>
            <person name="Shores K.A."/>
            <person name="Fouts D.E."/>
            <person name="Tourasse N.J."/>
            <person name="Angiuoli S.V."/>
            <person name="Kolonay J.F."/>
            <person name="Nelson W.C."/>
            <person name="Kolstoe A.-B."/>
            <person name="Fraser C.M."/>
            <person name="Read T.D."/>
        </authorList>
    </citation>
    <scope>NUCLEOTIDE SEQUENCE [LARGE SCALE GENOMIC DNA]</scope>
    <source>
        <strain>ATCC 10987 / NRS 248</strain>
    </source>
</reference>
<sequence>MKLGIVIFPSKMIQDKANGLRKRYDPHYALVPPHITLKTPFETQDEQLESIVNELHTIASKTNPFALHVGKVGSFAPVNNVLYFKVEKTPELTFLNEEMHSGFFTQEREYAFVPHLTIGQGLSDAEHADVLGRLRMKDFYYEQPIDRFHLLYQLENGTWTVHETFRLGKGNN</sequence>
<protein>
    <recommendedName>
        <fullName evidence="1">Putative phosphoesterase BCE_1348</fullName>
        <ecNumber evidence="1">3.1.-.-</ecNumber>
    </recommendedName>
</protein>
<gene>
    <name type="ordered locus">BCE_1348</name>
</gene>